<organism>
    <name type="scientific">Mycoplasma mycoides subsp. mycoides SC (strain CCUG 32753 / NCTC 10114 / PG1)</name>
    <dbReference type="NCBI Taxonomy" id="272632"/>
    <lineage>
        <taxon>Bacteria</taxon>
        <taxon>Bacillati</taxon>
        <taxon>Mycoplasmatota</taxon>
        <taxon>Mollicutes</taxon>
        <taxon>Mycoplasmataceae</taxon>
        <taxon>Mycoplasma</taxon>
    </lineage>
</organism>
<reference key="1">
    <citation type="journal article" date="2004" name="Genome Res.">
        <title>The genome sequence of Mycoplasma mycoides subsp. mycoides SC type strain PG1T, the causative agent of contagious bovine pleuropneumonia (CBPP).</title>
        <authorList>
            <person name="Westberg J."/>
            <person name="Persson A."/>
            <person name="Holmberg A."/>
            <person name="Goesmann A."/>
            <person name="Lundeberg J."/>
            <person name="Johansson K.-E."/>
            <person name="Pettersson B."/>
            <person name="Uhlen M."/>
        </authorList>
    </citation>
    <scope>NUCLEOTIDE SEQUENCE [LARGE SCALE GENOMIC DNA]</scope>
    <source>
        <strain>CCUG 32753 / NCTC 10114 / PG1</strain>
    </source>
</reference>
<dbReference type="EC" id="1.6.5.-" evidence="1"/>
<dbReference type="EC" id="1.7.1.17" evidence="1"/>
<dbReference type="EMBL" id="BX293980">
    <property type="protein sequence ID" value="CAE76682.1"/>
    <property type="molecule type" value="Genomic_DNA"/>
</dbReference>
<dbReference type="RefSeq" id="NP_975040.1">
    <property type="nucleotide sequence ID" value="NC_005364.2"/>
</dbReference>
<dbReference type="RefSeq" id="WP_011166240.1">
    <property type="nucleotide sequence ID" value="NC_005364.2"/>
</dbReference>
<dbReference type="SMR" id="Q6MUK2"/>
<dbReference type="STRING" id="272632.MSC_0029"/>
<dbReference type="KEGG" id="mmy:MSC_0029"/>
<dbReference type="PATRIC" id="fig|272632.4.peg.29"/>
<dbReference type="eggNOG" id="COG1182">
    <property type="taxonomic scope" value="Bacteria"/>
</dbReference>
<dbReference type="HOGENOM" id="CLU_088964_2_0_14"/>
<dbReference type="Proteomes" id="UP000001016">
    <property type="component" value="Chromosome"/>
</dbReference>
<dbReference type="GO" id="GO:0009055">
    <property type="term" value="F:electron transfer activity"/>
    <property type="evidence" value="ECO:0007669"/>
    <property type="project" value="UniProtKB-UniRule"/>
</dbReference>
<dbReference type="GO" id="GO:0010181">
    <property type="term" value="F:FMN binding"/>
    <property type="evidence" value="ECO:0007669"/>
    <property type="project" value="UniProtKB-UniRule"/>
</dbReference>
<dbReference type="GO" id="GO:0016652">
    <property type="term" value="F:oxidoreductase activity, acting on NAD(P)H as acceptor"/>
    <property type="evidence" value="ECO:0007669"/>
    <property type="project" value="UniProtKB-UniRule"/>
</dbReference>
<dbReference type="GO" id="GO:0016655">
    <property type="term" value="F:oxidoreductase activity, acting on NAD(P)H, quinone or similar compound as acceptor"/>
    <property type="evidence" value="ECO:0007669"/>
    <property type="project" value="InterPro"/>
</dbReference>
<dbReference type="Gene3D" id="3.40.50.360">
    <property type="match status" value="1"/>
</dbReference>
<dbReference type="HAMAP" id="MF_01216">
    <property type="entry name" value="Azoreductase_type1"/>
    <property type="match status" value="1"/>
</dbReference>
<dbReference type="InterPro" id="IPR003680">
    <property type="entry name" value="Flavodoxin_fold"/>
</dbReference>
<dbReference type="InterPro" id="IPR029039">
    <property type="entry name" value="Flavoprotein-like_sf"/>
</dbReference>
<dbReference type="InterPro" id="IPR050104">
    <property type="entry name" value="FMN-dep_NADH:Q_OxRdtase_AzoR1"/>
</dbReference>
<dbReference type="InterPro" id="IPR023048">
    <property type="entry name" value="NADH:quinone_OxRdtase_FMN_depd"/>
</dbReference>
<dbReference type="NCBIfam" id="NF002370">
    <property type="entry name" value="PRK01355.1"/>
    <property type="match status" value="1"/>
</dbReference>
<dbReference type="PANTHER" id="PTHR43741">
    <property type="entry name" value="FMN-DEPENDENT NADH-AZOREDUCTASE 1"/>
    <property type="match status" value="1"/>
</dbReference>
<dbReference type="PANTHER" id="PTHR43741:SF4">
    <property type="entry name" value="FMN-DEPENDENT NADH:QUINONE OXIDOREDUCTASE"/>
    <property type="match status" value="1"/>
</dbReference>
<dbReference type="Pfam" id="PF02525">
    <property type="entry name" value="Flavodoxin_2"/>
    <property type="match status" value="1"/>
</dbReference>
<dbReference type="SUPFAM" id="SSF52218">
    <property type="entry name" value="Flavoproteins"/>
    <property type="match status" value="1"/>
</dbReference>
<keyword id="KW-0285">Flavoprotein</keyword>
<keyword id="KW-0288">FMN</keyword>
<keyword id="KW-0520">NAD</keyword>
<keyword id="KW-0560">Oxidoreductase</keyword>
<keyword id="KW-1185">Reference proteome</keyword>
<feature type="chain" id="PRO_0000245937" description="FMN-dependent NADH:quinone oxidoreductase">
    <location>
        <begin position="1"/>
        <end position="199"/>
    </location>
</feature>
<feature type="binding site" evidence="1">
    <location>
        <begin position="17"/>
        <end position="19"/>
    </location>
    <ligand>
        <name>FMN</name>
        <dbReference type="ChEBI" id="CHEBI:58210"/>
    </ligand>
</feature>
<feature type="binding site" evidence="1">
    <location>
        <begin position="87"/>
        <end position="90"/>
    </location>
    <ligand>
        <name>FMN</name>
        <dbReference type="ChEBI" id="CHEBI:58210"/>
    </ligand>
</feature>
<evidence type="ECO:0000255" key="1">
    <source>
        <dbReference type="HAMAP-Rule" id="MF_01216"/>
    </source>
</evidence>
<accession>Q6MUK2</accession>
<name>AZOR_MYCMS</name>
<gene>
    <name evidence="1" type="primary">azoR</name>
    <name type="ordered locus">MSC_0029</name>
</gene>
<proteinExistence type="inferred from homology"/>
<protein>
    <recommendedName>
        <fullName evidence="1">FMN-dependent NADH:quinone oxidoreductase</fullName>
        <ecNumber evidence="1">1.6.5.-</ecNumber>
    </recommendedName>
    <alternativeName>
        <fullName evidence="1">Azo-dye reductase</fullName>
    </alternativeName>
    <alternativeName>
        <fullName evidence="1">FMN-dependent NADH-azo compound oxidoreductase</fullName>
    </alternativeName>
    <alternativeName>
        <fullName evidence="1">FMN-dependent NADH-azoreductase</fullName>
        <ecNumber evidence="1">1.7.1.17</ecNumber>
    </alternativeName>
</protein>
<sequence>MSKVLVLKTTAQADEVSNSVALTNRFLEEYKKFNPDDEIIIVDLNKDEVGTSILTSETSSTFYQQEVTKKYINLLKSVDKLVIACPMYNFSTPVTLKSFIDHVSVANETFSYKYSKKGDVIGLITNLKAQILGVQGAPLGWYPWGQHTQYVEGAMRFLGIDFNKTVLLAGVKVAPLLQLTPEQRVETIIDEVIEAARTF</sequence>
<comment type="function">
    <text evidence="1">Quinone reductase that provides resistance to thiol-specific stress caused by electrophilic quinones.</text>
</comment>
<comment type="function">
    <text evidence="1">Also exhibits azoreductase activity. Catalyzes the reductive cleavage of the azo bond in aromatic azo compounds to the corresponding amines.</text>
</comment>
<comment type="catalytic activity">
    <reaction evidence="1">
        <text>2 a quinone + NADH + H(+) = 2 a 1,4-benzosemiquinone + NAD(+)</text>
        <dbReference type="Rhea" id="RHEA:65952"/>
        <dbReference type="ChEBI" id="CHEBI:15378"/>
        <dbReference type="ChEBI" id="CHEBI:57540"/>
        <dbReference type="ChEBI" id="CHEBI:57945"/>
        <dbReference type="ChEBI" id="CHEBI:132124"/>
        <dbReference type="ChEBI" id="CHEBI:134225"/>
    </reaction>
</comment>
<comment type="catalytic activity">
    <reaction evidence="1">
        <text>N,N-dimethyl-1,4-phenylenediamine + anthranilate + 2 NAD(+) = 2-(4-dimethylaminophenyl)diazenylbenzoate + 2 NADH + 2 H(+)</text>
        <dbReference type="Rhea" id="RHEA:55872"/>
        <dbReference type="ChEBI" id="CHEBI:15378"/>
        <dbReference type="ChEBI" id="CHEBI:15783"/>
        <dbReference type="ChEBI" id="CHEBI:16567"/>
        <dbReference type="ChEBI" id="CHEBI:57540"/>
        <dbReference type="ChEBI" id="CHEBI:57945"/>
        <dbReference type="ChEBI" id="CHEBI:71579"/>
        <dbReference type="EC" id="1.7.1.17"/>
    </reaction>
</comment>
<comment type="cofactor">
    <cofactor evidence="1">
        <name>FMN</name>
        <dbReference type="ChEBI" id="CHEBI:58210"/>
    </cofactor>
    <text evidence="1">Binds 1 FMN per subunit.</text>
</comment>
<comment type="subunit">
    <text evidence="1">Homodimer.</text>
</comment>
<comment type="similarity">
    <text evidence="1">Belongs to the azoreductase type 1 family.</text>
</comment>